<protein>
    <recommendedName>
        <fullName>Forkhead box protein D3</fullName>
    </recommendedName>
    <alternativeName>
        <fullName>HNF3/FH transcription factor genesis</fullName>
    </alternativeName>
    <alternativeName>
        <fullName>Hepatocyte nuclear factor 3 forkhead homolog 2</fullName>
        <shortName>HFH-2</shortName>
    </alternativeName>
</protein>
<reference key="1">
    <citation type="journal article" date="1993" name="Proc. Natl. Acad. Sci. U.S.A.">
        <title>Identification of nine tissue-specific transcription factors of the hepatocyte nuclear factor 3/forkhead DNA-binding-domain family.</title>
        <authorList>
            <person name="Clevidence D.E."/>
            <person name="Overdier D.G."/>
            <person name="Tao W."/>
            <person name="Qian X."/>
            <person name="Pani L."/>
            <person name="Lai E."/>
            <person name="Costa R.H."/>
        </authorList>
    </citation>
    <scope>NUCLEOTIDE SEQUENCE [MRNA]</scope>
    <source>
        <strain>Sprague-Dawley</strain>
    </source>
</reference>
<reference key="2">
    <citation type="journal article" date="1998" name="J. Mol. Biol.">
        <title>Structural changes in the region directly adjacent to the DNA-binding helix highlight a possible mechanism to explain the observed changes in the sequence-specific binding of winged helix proteins.</title>
        <authorList>
            <person name="Marsden I."/>
            <person name="Jin C."/>
            <person name="Liao X."/>
        </authorList>
    </citation>
    <scope>STRUCTURE BY NMR OF 3-97</scope>
</reference>
<dbReference type="EMBL" id="L13202">
    <property type="protein sequence ID" value="AAA41319.1"/>
    <property type="molecule type" value="mRNA"/>
</dbReference>
<dbReference type="PIR" id="I60917">
    <property type="entry name" value="I60917"/>
</dbReference>
<dbReference type="PDB" id="2HDC">
    <property type="method" value="NMR"/>
    <property type="chains" value="A=2-98"/>
</dbReference>
<dbReference type="PDB" id="2HFH">
    <property type="method" value="NMR"/>
    <property type="chains" value="A=2-101"/>
</dbReference>
<dbReference type="PDBsum" id="2HDC"/>
<dbReference type="PDBsum" id="2HFH"/>
<dbReference type="SMR" id="Q63245"/>
<dbReference type="PhosphoSitePlus" id="Q63245"/>
<dbReference type="PaxDb" id="10116-ENSRNOP00000054694"/>
<dbReference type="UCSC" id="RGD:621715">
    <property type="organism name" value="rat"/>
</dbReference>
<dbReference type="AGR" id="RGD:621715"/>
<dbReference type="RGD" id="621715">
    <property type="gene designation" value="Foxd3"/>
</dbReference>
<dbReference type="eggNOG" id="KOG2294">
    <property type="taxonomic scope" value="Eukaryota"/>
</dbReference>
<dbReference type="InParanoid" id="Q63245"/>
<dbReference type="PhylomeDB" id="Q63245"/>
<dbReference type="EvolutionaryTrace" id="Q63245"/>
<dbReference type="Proteomes" id="UP000002494">
    <property type="component" value="Unplaced"/>
</dbReference>
<dbReference type="GO" id="GO:0000785">
    <property type="term" value="C:chromatin"/>
    <property type="evidence" value="ECO:0000266"/>
    <property type="project" value="RGD"/>
</dbReference>
<dbReference type="GO" id="GO:0005634">
    <property type="term" value="C:nucleus"/>
    <property type="evidence" value="ECO:0007669"/>
    <property type="project" value="UniProtKB-SubCell"/>
</dbReference>
<dbReference type="GO" id="GO:0003677">
    <property type="term" value="F:DNA binding"/>
    <property type="evidence" value="ECO:0000314"/>
    <property type="project" value="RGD"/>
</dbReference>
<dbReference type="GO" id="GO:0003700">
    <property type="term" value="F:DNA-binding transcription factor activity"/>
    <property type="evidence" value="ECO:0000250"/>
    <property type="project" value="UniProtKB"/>
</dbReference>
<dbReference type="GO" id="GO:0000981">
    <property type="term" value="F:DNA-binding transcription factor activity, RNA polymerase II-specific"/>
    <property type="evidence" value="ECO:0000318"/>
    <property type="project" value="GO_Central"/>
</dbReference>
<dbReference type="GO" id="GO:0001227">
    <property type="term" value="F:DNA-binding transcription repressor activity, RNA polymerase II-specific"/>
    <property type="evidence" value="ECO:0000266"/>
    <property type="project" value="RGD"/>
</dbReference>
<dbReference type="GO" id="GO:0003690">
    <property type="term" value="F:double-stranded DNA binding"/>
    <property type="evidence" value="ECO:0000315"/>
    <property type="project" value="RGD"/>
</dbReference>
<dbReference type="GO" id="GO:0000978">
    <property type="term" value="F:RNA polymerase II cis-regulatory region sequence-specific DNA binding"/>
    <property type="evidence" value="ECO:0000318"/>
    <property type="project" value="GO_Central"/>
</dbReference>
<dbReference type="GO" id="GO:0000977">
    <property type="term" value="F:RNA polymerase II transcription regulatory region sequence-specific DNA binding"/>
    <property type="evidence" value="ECO:0000266"/>
    <property type="project" value="RGD"/>
</dbReference>
<dbReference type="GO" id="GO:1990837">
    <property type="term" value="F:sequence-specific double-stranded DNA binding"/>
    <property type="evidence" value="ECO:0000266"/>
    <property type="project" value="RGD"/>
</dbReference>
<dbReference type="GO" id="GO:0000976">
    <property type="term" value="F:transcription cis-regulatory region binding"/>
    <property type="evidence" value="ECO:0000266"/>
    <property type="project" value="RGD"/>
</dbReference>
<dbReference type="GO" id="GO:0009653">
    <property type="term" value="P:anatomical structure morphogenesis"/>
    <property type="evidence" value="ECO:0000318"/>
    <property type="project" value="GO_Central"/>
</dbReference>
<dbReference type="GO" id="GO:0030154">
    <property type="term" value="P:cell differentiation"/>
    <property type="evidence" value="ECO:0000318"/>
    <property type="project" value="GO_Central"/>
</dbReference>
<dbReference type="GO" id="GO:1990830">
    <property type="term" value="P:cellular response to leukemia inhibitory factor"/>
    <property type="evidence" value="ECO:0000266"/>
    <property type="project" value="RGD"/>
</dbReference>
<dbReference type="GO" id="GO:0001892">
    <property type="term" value="P:embryonic placenta development"/>
    <property type="evidence" value="ECO:0000266"/>
    <property type="project" value="RGD"/>
</dbReference>
<dbReference type="GO" id="GO:0001701">
    <property type="term" value="P:in utero embryonic development"/>
    <property type="evidence" value="ECO:0000250"/>
    <property type="project" value="UniProtKB"/>
</dbReference>
<dbReference type="GO" id="GO:0000122">
    <property type="term" value="P:negative regulation of transcription by RNA polymerase II"/>
    <property type="evidence" value="ECO:0000250"/>
    <property type="project" value="UniProtKB"/>
</dbReference>
<dbReference type="GO" id="GO:0045944">
    <property type="term" value="P:positive regulation of transcription by RNA polymerase II"/>
    <property type="evidence" value="ECO:0000250"/>
    <property type="project" value="UniProtKB"/>
</dbReference>
<dbReference type="GO" id="GO:0006355">
    <property type="term" value="P:regulation of DNA-templated transcription"/>
    <property type="evidence" value="ECO:0000304"/>
    <property type="project" value="RGD"/>
</dbReference>
<dbReference type="GO" id="GO:0006357">
    <property type="term" value="P:regulation of transcription by RNA polymerase II"/>
    <property type="evidence" value="ECO:0000318"/>
    <property type="project" value="GO_Central"/>
</dbReference>
<dbReference type="GO" id="GO:0001829">
    <property type="term" value="P:trophectodermal cell differentiation"/>
    <property type="evidence" value="ECO:0000266"/>
    <property type="project" value="RGD"/>
</dbReference>
<dbReference type="CDD" id="cd20047">
    <property type="entry name" value="FH_FOXD3"/>
    <property type="match status" value="1"/>
</dbReference>
<dbReference type="FunFam" id="1.10.10.10:FF:000016">
    <property type="entry name" value="Forkhead box protein I1"/>
    <property type="match status" value="1"/>
</dbReference>
<dbReference type="Gene3D" id="1.10.10.10">
    <property type="entry name" value="Winged helix-like DNA-binding domain superfamily/Winged helix DNA-binding domain"/>
    <property type="match status" value="1"/>
</dbReference>
<dbReference type="InterPro" id="IPR047392">
    <property type="entry name" value="FH_FOXD3"/>
</dbReference>
<dbReference type="InterPro" id="IPR001766">
    <property type="entry name" value="Fork_head_dom"/>
</dbReference>
<dbReference type="InterPro" id="IPR050211">
    <property type="entry name" value="FOX_domain-containing"/>
</dbReference>
<dbReference type="InterPro" id="IPR018122">
    <property type="entry name" value="TF_fork_head_CS_1"/>
</dbReference>
<dbReference type="InterPro" id="IPR030456">
    <property type="entry name" value="TF_fork_head_CS_2"/>
</dbReference>
<dbReference type="InterPro" id="IPR036388">
    <property type="entry name" value="WH-like_DNA-bd_sf"/>
</dbReference>
<dbReference type="InterPro" id="IPR036390">
    <property type="entry name" value="WH_DNA-bd_sf"/>
</dbReference>
<dbReference type="PANTHER" id="PTHR11829">
    <property type="entry name" value="FORKHEAD BOX PROTEIN"/>
    <property type="match status" value="1"/>
</dbReference>
<dbReference type="PANTHER" id="PTHR11829:SF405">
    <property type="entry name" value="FORKHEAD BOX PROTEIN D3"/>
    <property type="match status" value="1"/>
</dbReference>
<dbReference type="Pfam" id="PF00250">
    <property type="entry name" value="Forkhead"/>
    <property type="match status" value="1"/>
</dbReference>
<dbReference type="PRINTS" id="PR00053">
    <property type="entry name" value="FORKHEAD"/>
</dbReference>
<dbReference type="SMART" id="SM00339">
    <property type="entry name" value="FH"/>
    <property type="match status" value="1"/>
</dbReference>
<dbReference type="SUPFAM" id="SSF46785">
    <property type="entry name" value="Winged helix' DNA-binding domain"/>
    <property type="match status" value="1"/>
</dbReference>
<dbReference type="PROSITE" id="PS00657">
    <property type="entry name" value="FORK_HEAD_1"/>
    <property type="match status" value="1"/>
</dbReference>
<dbReference type="PROSITE" id="PS00658">
    <property type="entry name" value="FORK_HEAD_2"/>
    <property type="match status" value="1"/>
</dbReference>
<dbReference type="PROSITE" id="PS50039">
    <property type="entry name" value="FORK_HEAD_3"/>
    <property type="match status" value="1"/>
</dbReference>
<gene>
    <name type="primary">Foxd3</name>
    <name type="synonym">Hfh2</name>
</gene>
<organism>
    <name type="scientific">Rattus norvegicus</name>
    <name type="common">Rat</name>
    <dbReference type="NCBI Taxonomy" id="10116"/>
    <lineage>
        <taxon>Eukaryota</taxon>
        <taxon>Metazoa</taxon>
        <taxon>Chordata</taxon>
        <taxon>Craniata</taxon>
        <taxon>Vertebrata</taxon>
        <taxon>Euteleostomi</taxon>
        <taxon>Mammalia</taxon>
        <taxon>Eutheria</taxon>
        <taxon>Euarchontoglires</taxon>
        <taxon>Glires</taxon>
        <taxon>Rodentia</taxon>
        <taxon>Myomorpha</taxon>
        <taxon>Muroidea</taxon>
        <taxon>Muridae</taxon>
        <taxon>Murinae</taxon>
        <taxon>Rattus</taxon>
    </lineage>
</organism>
<proteinExistence type="evidence at protein level"/>
<accession>Q63245</accession>
<comment type="function">
    <text evidence="1 2">Binds to the consensus sequence 5'-A[AT]T[AG]TTTGTTT-3' and acts as a transcriptional repressor. Also acts as a transcriptional activator (By similarity). Negatively regulates transcription of transcriptional repressor Rhit/Zfp13 (By similarity). Promotes development of neural crest cells from neural tube progenitors. Restricts neural progenitor cells to the neural crest lineage while suppressing interneuron differentiation. Required for maintenance of pluripotent cells in the pre-implantation and peri-implantation stages of embryogenesis (By similarity).</text>
</comment>
<comment type="subunit">
    <text evidence="2">Interacts with POU5F1.</text>
</comment>
<comment type="subcellular location">
    <subcellularLocation>
        <location evidence="3">Nucleus</location>
    </subcellularLocation>
</comment>
<name>FOXD3_RAT</name>
<keyword id="KW-0002">3D-structure</keyword>
<keyword id="KW-0010">Activator</keyword>
<keyword id="KW-0217">Developmental protein</keyword>
<keyword id="KW-0238">DNA-binding</keyword>
<keyword id="KW-0539">Nucleus</keyword>
<keyword id="KW-1185">Reference proteome</keyword>
<keyword id="KW-0678">Repressor</keyword>
<keyword id="KW-0804">Transcription</keyword>
<keyword id="KW-0805">Transcription regulation</keyword>
<evidence type="ECO:0000250" key="1">
    <source>
        <dbReference type="UniProtKB" id="Q61060"/>
    </source>
</evidence>
<evidence type="ECO:0000250" key="2">
    <source>
        <dbReference type="UniProtKB" id="Q9UJU5"/>
    </source>
</evidence>
<evidence type="ECO:0000255" key="3">
    <source>
        <dbReference type="PROSITE-ProRule" id="PRU00089"/>
    </source>
</evidence>
<evidence type="ECO:0007829" key="4">
    <source>
        <dbReference type="PDB" id="2HDC"/>
    </source>
</evidence>
<feature type="chain" id="PRO_0000091819" description="Forkhead box protein D3">
    <location>
        <begin position="1" status="less than"/>
        <end position="101" status="greater than"/>
    </location>
</feature>
<feature type="DNA-binding region" description="Fork-head" evidence="3">
    <location>
        <begin position="3"/>
        <end position="97"/>
    </location>
</feature>
<feature type="non-terminal residue">
    <location>
        <position position="1"/>
    </location>
</feature>
<feature type="non-terminal residue">
    <location>
        <position position="101"/>
    </location>
</feature>
<feature type="helix" evidence="4">
    <location>
        <begin position="8"/>
        <end position="17"/>
    </location>
</feature>
<feature type="turn" evidence="4">
    <location>
        <begin position="20"/>
        <end position="22"/>
    </location>
</feature>
<feature type="helix" evidence="4">
    <location>
        <begin position="26"/>
        <end position="36"/>
    </location>
</feature>
<feature type="helix" evidence="4">
    <location>
        <begin position="38"/>
        <end position="43"/>
    </location>
</feature>
<feature type="helix" evidence="4">
    <location>
        <begin position="47"/>
        <end position="59"/>
    </location>
</feature>
<feature type="strand" evidence="4">
    <location>
        <begin position="62"/>
        <end position="64"/>
    </location>
</feature>
<feature type="strand" evidence="4">
    <location>
        <begin position="71"/>
        <end position="73"/>
    </location>
</feature>
<feature type="strand" evidence="4">
    <location>
        <begin position="76"/>
        <end position="78"/>
    </location>
</feature>
<feature type="helix" evidence="4">
    <location>
        <begin position="83"/>
        <end position="89"/>
    </location>
</feature>
<feature type="strand" evidence="4">
    <location>
        <begin position="94"/>
        <end position="96"/>
    </location>
</feature>
<sequence>LVKPPYSYIALITMAILQSPQKKLTLSGICEFISNRFPYYREKFPAWQNSIRHNLSLNDCFVKIPREPGNPGKGNYWTLDPQSEDMFDNGSFLRRRKRFKR</sequence>